<dbReference type="EC" id="1.1.1.290" evidence="1"/>
<dbReference type="EMBL" id="CP000890">
    <property type="protein sequence ID" value="ABX78362.1"/>
    <property type="molecule type" value="Genomic_DNA"/>
</dbReference>
<dbReference type="SMR" id="A9NAQ7"/>
<dbReference type="KEGG" id="cbs:COXBURSA331_A2011"/>
<dbReference type="HOGENOM" id="CLU_019796_4_0_6"/>
<dbReference type="UniPathway" id="UPA00244">
    <property type="reaction ID" value="UER00310"/>
</dbReference>
<dbReference type="GO" id="GO:0005829">
    <property type="term" value="C:cytosol"/>
    <property type="evidence" value="ECO:0007669"/>
    <property type="project" value="TreeGrafter"/>
</dbReference>
<dbReference type="GO" id="GO:0033711">
    <property type="term" value="F:4-phosphoerythronate dehydrogenase activity"/>
    <property type="evidence" value="ECO:0007669"/>
    <property type="project" value="UniProtKB-EC"/>
</dbReference>
<dbReference type="GO" id="GO:0030267">
    <property type="term" value="F:glyoxylate reductase (NADPH) activity"/>
    <property type="evidence" value="ECO:0007669"/>
    <property type="project" value="TreeGrafter"/>
</dbReference>
<dbReference type="GO" id="GO:0016618">
    <property type="term" value="F:hydroxypyruvate reductase [NAD(P)H] activity"/>
    <property type="evidence" value="ECO:0007669"/>
    <property type="project" value="TreeGrafter"/>
</dbReference>
<dbReference type="GO" id="GO:0051287">
    <property type="term" value="F:NAD binding"/>
    <property type="evidence" value="ECO:0007669"/>
    <property type="project" value="InterPro"/>
</dbReference>
<dbReference type="GO" id="GO:0046983">
    <property type="term" value="F:protein dimerization activity"/>
    <property type="evidence" value="ECO:0007669"/>
    <property type="project" value="InterPro"/>
</dbReference>
<dbReference type="GO" id="GO:0008615">
    <property type="term" value="P:pyridoxine biosynthetic process"/>
    <property type="evidence" value="ECO:0007669"/>
    <property type="project" value="UniProtKB-UniRule"/>
</dbReference>
<dbReference type="CDD" id="cd12158">
    <property type="entry name" value="ErythrP_dh"/>
    <property type="match status" value="1"/>
</dbReference>
<dbReference type="Gene3D" id="3.30.1370.170">
    <property type="match status" value="1"/>
</dbReference>
<dbReference type="Gene3D" id="3.40.50.720">
    <property type="entry name" value="NAD(P)-binding Rossmann-like Domain"/>
    <property type="match status" value="2"/>
</dbReference>
<dbReference type="HAMAP" id="MF_01825">
    <property type="entry name" value="PdxB"/>
    <property type="match status" value="1"/>
</dbReference>
<dbReference type="InterPro" id="IPR050223">
    <property type="entry name" value="D-isomer_2-hydroxyacid_DH"/>
</dbReference>
<dbReference type="InterPro" id="IPR006139">
    <property type="entry name" value="D-isomer_2_OHA_DH_cat_dom"/>
</dbReference>
<dbReference type="InterPro" id="IPR029753">
    <property type="entry name" value="D-isomer_DH_CS"/>
</dbReference>
<dbReference type="InterPro" id="IPR006140">
    <property type="entry name" value="D-isomer_DH_NAD-bd"/>
</dbReference>
<dbReference type="InterPro" id="IPR020921">
    <property type="entry name" value="Erythronate-4-P_DHase"/>
</dbReference>
<dbReference type="InterPro" id="IPR024531">
    <property type="entry name" value="Erythronate-4-P_DHase_dimer"/>
</dbReference>
<dbReference type="InterPro" id="IPR036291">
    <property type="entry name" value="NAD(P)-bd_dom_sf"/>
</dbReference>
<dbReference type="InterPro" id="IPR038251">
    <property type="entry name" value="PdxB_dimer_sf"/>
</dbReference>
<dbReference type="PANTHER" id="PTHR10996:SF178">
    <property type="entry name" value="2-HYDROXYACID DEHYDROGENASE YGL185C-RELATED"/>
    <property type="match status" value="1"/>
</dbReference>
<dbReference type="PANTHER" id="PTHR10996">
    <property type="entry name" value="2-HYDROXYACID DEHYDROGENASE-RELATED"/>
    <property type="match status" value="1"/>
</dbReference>
<dbReference type="Pfam" id="PF00389">
    <property type="entry name" value="2-Hacid_dh"/>
    <property type="match status" value="1"/>
</dbReference>
<dbReference type="Pfam" id="PF02826">
    <property type="entry name" value="2-Hacid_dh_C"/>
    <property type="match status" value="1"/>
</dbReference>
<dbReference type="Pfam" id="PF11890">
    <property type="entry name" value="DUF3410"/>
    <property type="match status" value="1"/>
</dbReference>
<dbReference type="SUPFAM" id="SSF52283">
    <property type="entry name" value="Formate/glycerate dehydrogenase catalytic domain-like"/>
    <property type="match status" value="1"/>
</dbReference>
<dbReference type="SUPFAM" id="SSF51735">
    <property type="entry name" value="NAD(P)-binding Rossmann-fold domains"/>
    <property type="match status" value="1"/>
</dbReference>
<dbReference type="PROSITE" id="PS00671">
    <property type="entry name" value="D_2_HYDROXYACID_DH_3"/>
    <property type="match status" value="1"/>
</dbReference>
<name>PDXB_COXBR</name>
<proteinExistence type="inferred from homology"/>
<organism>
    <name type="scientific">Coxiella burnetii (strain RSA 331 / Henzerling II)</name>
    <dbReference type="NCBI Taxonomy" id="360115"/>
    <lineage>
        <taxon>Bacteria</taxon>
        <taxon>Pseudomonadati</taxon>
        <taxon>Pseudomonadota</taxon>
        <taxon>Gammaproteobacteria</taxon>
        <taxon>Legionellales</taxon>
        <taxon>Coxiellaceae</taxon>
        <taxon>Coxiella</taxon>
    </lineage>
</organism>
<evidence type="ECO:0000255" key="1">
    <source>
        <dbReference type="HAMAP-Rule" id="MF_01825"/>
    </source>
</evidence>
<keyword id="KW-0963">Cytoplasm</keyword>
<keyword id="KW-0520">NAD</keyword>
<keyword id="KW-0560">Oxidoreductase</keyword>
<keyword id="KW-0664">Pyridoxine biosynthesis</keyword>
<sequence length="366" mass="40969">MIKILADDRIPFVSELFGDFGELILKPGAHIQNRDLLAVNALLTRSITSVDSALLEGTAVEFVGSATAGFDHIDSTWLKKQSIHWAYAPGANATAVAEYVLHCVAYLHKKNLLPRKSATAAIIGVGHVGCVVSDRLRKIGFTVFHNDPPRAQLEKDFISVPLASLANVDLVCLHTPLVKTGNFPTYHLIDNRFLKMLKPGSVLLNAGRGAVIDNNALLQCDHVITCLDVWENEPTVNLQLLEKTTIATPHIAGYSKQAKLRATLMIYDAFLKYFHLSDTRRFSELQQLQETMTLNIQDGRNAEDILLTLFDPGRESQRMRETLAENPDQFEYLRRHFPLRNEFSAIQLTPTPSALLRKELDDWGFK</sequence>
<gene>
    <name evidence="1" type="primary">pdxB</name>
    <name type="ordered locus">COXBURSA331_A2011</name>
</gene>
<protein>
    <recommendedName>
        <fullName evidence="1">Erythronate-4-phosphate dehydrogenase</fullName>
        <ecNumber evidence="1">1.1.1.290</ecNumber>
    </recommendedName>
</protein>
<reference key="1">
    <citation type="submission" date="2007-11" db="EMBL/GenBank/DDBJ databases">
        <title>Genome sequencing of phylogenetically and phenotypically diverse Coxiella burnetii isolates.</title>
        <authorList>
            <person name="Seshadri R."/>
            <person name="Samuel J.E."/>
        </authorList>
    </citation>
    <scope>NUCLEOTIDE SEQUENCE [LARGE SCALE GENOMIC DNA]</scope>
    <source>
        <strain>RSA 331 / Henzerling II</strain>
    </source>
</reference>
<feature type="chain" id="PRO_1000088416" description="Erythronate-4-phosphate dehydrogenase">
    <location>
        <begin position="1"/>
        <end position="366"/>
    </location>
</feature>
<feature type="active site" evidence="1">
    <location>
        <position position="208"/>
    </location>
</feature>
<feature type="active site" evidence="1">
    <location>
        <position position="233"/>
    </location>
</feature>
<feature type="active site" description="Proton donor" evidence="1">
    <location>
        <position position="250"/>
    </location>
</feature>
<feature type="binding site" evidence="1">
    <location>
        <position position="46"/>
    </location>
    <ligand>
        <name>substrate</name>
    </ligand>
</feature>
<feature type="binding site" evidence="1">
    <location>
        <position position="67"/>
    </location>
    <ligand>
        <name>substrate</name>
    </ligand>
</feature>
<feature type="binding site" evidence="1">
    <location>
        <position position="147"/>
    </location>
    <ligand>
        <name>NAD(+)</name>
        <dbReference type="ChEBI" id="CHEBI:57540"/>
    </ligand>
</feature>
<feature type="binding site" evidence="1">
    <location>
        <position position="175"/>
    </location>
    <ligand>
        <name>NAD(+)</name>
        <dbReference type="ChEBI" id="CHEBI:57540"/>
    </ligand>
</feature>
<feature type="binding site" evidence="1">
    <location>
        <position position="228"/>
    </location>
    <ligand>
        <name>NAD(+)</name>
        <dbReference type="ChEBI" id="CHEBI:57540"/>
    </ligand>
</feature>
<feature type="binding site" evidence="1">
    <location>
        <position position="253"/>
    </location>
    <ligand>
        <name>NAD(+)</name>
        <dbReference type="ChEBI" id="CHEBI:57540"/>
    </ligand>
</feature>
<feature type="binding site" evidence="1">
    <location>
        <position position="254"/>
    </location>
    <ligand>
        <name>substrate</name>
    </ligand>
</feature>
<accession>A9NAQ7</accession>
<comment type="function">
    <text evidence="1">Catalyzes the oxidation of erythronate-4-phosphate to 3-hydroxy-2-oxo-4-phosphonooxybutanoate.</text>
</comment>
<comment type="catalytic activity">
    <reaction evidence="1">
        <text>4-phospho-D-erythronate + NAD(+) = (R)-3-hydroxy-2-oxo-4-phosphooxybutanoate + NADH + H(+)</text>
        <dbReference type="Rhea" id="RHEA:18829"/>
        <dbReference type="ChEBI" id="CHEBI:15378"/>
        <dbReference type="ChEBI" id="CHEBI:57540"/>
        <dbReference type="ChEBI" id="CHEBI:57945"/>
        <dbReference type="ChEBI" id="CHEBI:58538"/>
        <dbReference type="ChEBI" id="CHEBI:58766"/>
        <dbReference type="EC" id="1.1.1.290"/>
    </reaction>
</comment>
<comment type="pathway">
    <text evidence="1">Cofactor biosynthesis; pyridoxine 5'-phosphate biosynthesis; pyridoxine 5'-phosphate from D-erythrose 4-phosphate: step 2/5.</text>
</comment>
<comment type="subunit">
    <text evidence="1">Homodimer.</text>
</comment>
<comment type="subcellular location">
    <subcellularLocation>
        <location evidence="1">Cytoplasm</location>
    </subcellularLocation>
</comment>
<comment type="similarity">
    <text evidence="1">Belongs to the D-isomer specific 2-hydroxyacid dehydrogenase family. PdxB subfamily.</text>
</comment>